<accession>P10664</accession>
<accession>D6VQ32</accession>
<feature type="initiator methionine" description="Removed" evidence="2">
    <location>
        <position position="1"/>
    </location>
</feature>
<feature type="chain" id="PRO_0000129367" description="Large ribosomal subunit protein uL4A">
    <location>
        <begin position="2"/>
        <end position="362"/>
    </location>
</feature>
<feature type="region of interest" description="C-terminal-extended nuclear localization signal" evidence="5">
    <location>
        <begin position="277"/>
        <end position="362"/>
    </location>
</feature>
<feature type="modified residue" description="N-acetylserine" evidence="2">
    <location>
        <position position="2"/>
    </location>
</feature>
<feature type="modified residue" description="Omega-N-methylarginine" evidence="6">
    <location>
        <position position="95"/>
    </location>
</feature>
<feature type="mutagenesis site" description="Leads to a slower growth at higher temperatures but allows RPL4 assembly into the 60S subunit; when associated with E-98." evidence="5">
    <original>R</original>
    <variation>E</variation>
    <location>
        <position position="95"/>
    </location>
</feature>
<feature type="mutagenesis site" description="Leads to a slower growth at higher temperatures but allows RPL4 assembly into the 60S subunit; when associated with E-95." evidence="5">
    <original>R</original>
    <variation>E</variation>
    <location>
        <position position="98"/>
    </location>
</feature>
<feature type="mutagenesis site" description="Leads to an inefficient release from ACL4 with a delayed assembly into the 60S subunit; when associated with A-290 and A-295." evidence="5">
    <original>I</original>
    <variation>A</variation>
    <location>
        <position position="289"/>
    </location>
</feature>
<feature type="mutagenesis site" description="Leads to an inefficient release from ACL4 with a delayed assembly into the 60S subunit; when associated with A-289 and A-295." evidence="5">
    <original>I</original>
    <variation>A</variation>
    <location>
        <position position="290"/>
    </location>
</feature>
<feature type="mutagenesis site" description="Leads to an inefficient release from ACL4 with a delayed assembly into the 60S subunit; when associated with A-289 and A-290." evidence="5">
    <original>I</original>
    <variation>A</variation>
    <location>
        <position position="295"/>
    </location>
</feature>
<feature type="mutagenesis site" description="Significantly diminished nuclear localization; when associated with A-315 and A-319." evidence="5">
    <original>K</original>
    <variation>A</variation>
    <location>
        <position position="314"/>
    </location>
</feature>
<feature type="mutagenesis site" description="Significantly diminished nuclear localization; when associated with A-314 and A-319." evidence="5">
    <original>K</original>
    <variation>A</variation>
    <location>
        <position position="315"/>
    </location>
</feature>
<feature type="mutagenesis site" description="Significantly diminished nuclear localization; when associated with A-314 and A-315." evidence="5">
    <original>K</original>
    <variation>A</variation>
    <location>
        <position position="319"/>
    </location>
</feature>
<feature type="mutagenesis site" description="Leads to an inefficient release from ACL4 with a delayed assembly into the 60S subunit; when associated with A-334." evidence="5">
    <original>K</original>
    <variation>E</variation>
    <location>
        <position position="332"/>
    </location>
</feature>
<feature type="mutagenesis site" description="Leads to an inefficient release from ACL4 with a delayed assembly into the 60S subunit; when associated with e-332." evidence="5">
    <original>F</original>
    <variation>A</variation>
    <location>
        <position position="334"/>
    </location>
</feature>
<feature type="sequence conflict" description="In Ref. 1; AAA34974." evidence="9" ref="1">
    <original>V</original>
    <variation>L</variation>
    <location>
        <position position="38"/>
    </location>
</feature>
<feature type="sequence conflict" description="In Ref. 1; AAA34974." evidence="9" ref="1">
    <original>K</original>
    <variation>T</variation>
    <location>
        <position position="144"/>
    </location>
</feature>
<feature type="sequence conflict" description="In Ref. 1; AAA34974." evidence="9" ref="1">
    <original>E</original>
    <variation>D</variation>
    <location>
        <position position="157"/>
    </location>
</feature>
<feature type="sequence conflict" description="In Ref. 1; AAA34974." evidence="9" ref="1">
    <original>G</original>
    <variation>S</variation>
    <location>
        <position position="224"/>
    </location>
</feature>
<feature type="sequence conflict" description="In Ref. 1; AAA34974." evidence="9" ref="1">
    <original>G</original>
    <variation>S</variation>
    <location>
        <position position="241"/>
    </location>
</feature>
<feature type="strand" evidence="12">
    <location>
        <begin position="6"/>
        <end position="9"/>
    </location>
</feature>
<feature type="strand" evidence="12">
    <location>
        <begin position="15"/>
        <end position="20"/>
    </location>
</feature>
<feature type="helix" evidence="12">
    <location>
        <begin position="32"/>
        <end position="42"/>
    </location>
</feature>
<feature type="turn" evidence="12">
    <location>
        <begin position="43"/>
        <end position="45"/>
    </location>
</feature>
<feature type="turn" evidence="12">
    <location>
        <begin position="56"/>
        <end position="58"/>
    </location>
</feature>
<feature type="strand" evidence="12">
    <location>
        <begin position="67"/>
        <end position="71"/>
    </location>
</feature>
<feature type="strand" evidence="12">
    <location>
        <begin position="80"/>
        <end position="84"/>
    </location>
</feature>
<feature type="strand" evidence="12">
    <location>
        <begin position="90"/>
        <end position="94"/>
    </location>
</feature>
<feature type="helix" evidence="12">
    <location>
        <begin position="115"/>
        <end position="127"/>
    </location>
</feature>
<feature type="helix" evidence="12">
    <location>
        <begin position="128"/>
        <end position="130"/>
    </location>
</feature>
<feature type="helix" evidence="12">
    <location>
        <begin position="133"/>
        <end position="138"/>
    </location>
</feature>
<feature type="strand" evidence="12">
    <location>
        <begin position="148"/>
        <end position="152"/>
    </location>
</feature>
<feature type="helix" evidence="12">
    <location>
        <begin position="154"/>
        <end position="156"/>
    </location>
</feature>
<feature type="helix" evidence="12">
    <location>
        <begin position="162"/>
        <end position="172"/>
    </location>
</feature>
<feature type="turn" evidence="12">
    <location>
        <begin position="173"/>
        <end position="176"/>
    </location>
</feature>
<feature type="helix" evidence="12">
    <location>
        <begin position="177"/>
        <end position="183"/>
    </location>
</feature>
<feature type="helix" evidence="12">
    <location>
        <begin position="191"/>
        <end position="195"/>
    </location>
</feature>
<feature type="strand" evidence="12">
    <location>
        <begin position="206"/>
        <end position="211"/>
    </location>
</feature>
<feature type="helix" evidence="12">
    <location>
        <begin position="215"/>
        <end position="218"/>
    </location>
</feature>
<feature type="strand" evidence="12">
    <location>
        <begin position="219"/>
        <end position="222"/>
    </location>
</feature>
<feature type="strand" evidence="12">
    <location>
        <begin position="226"/>
        <end position="229"/>
    </location>
</feature>
<feature type="turn" evidence="12">
    <location>
        <begin position="230"/>
        <end position="232"/>
    </location>
</feature>
<feature type="helix" evidence="12">
    <location>
        <begin position="235"/>
        <end position="238"/>
    </location>
</feature>
<feature type="helix" evidence="12">
    <location>
        <begin position="240"/>
        <end position="242"/>
    </location>
</feature>
<feature type="strand" evidence="12">
    <location>
        <begin position="248"/>
        <end position="251"/>
    </location>
</feature>
<feature type="helix" evidence="12">
    <location>
        <begin position="252"/>
        <end position="262"/>
    </location>
</feature>
<feature type="strand" evidence="12">
    <location>
        <begin position="265"/>
        <end position="267"/>
    </location>
</feature>
<feature type="strand" evidence="12">
    <location>
        <begin position="280"/>
        <end position="282"/>
    </location>
</feature>
<feature type="helix" evidence="12">
    <location>
        <begin position="287"/>
        <end position="290"/>
    </location>
</feature>
<feature type="helix" evidence="12">
    <location>
        <begin position="295"/>
        <end position="297"/>
    </location>
</feature>
<feature type="strand" evidence="12">
    <location>
        <begin position="317"/>
        <end position="320"/>
    </location>
</feature>
<feature type="helix" evidence="12">
    <location>
        <begin position="323"/>
        <end position="326"/>
    </location>
</feature>
<feature type="helix" evidence="12">
    <location>
        <begin position="331"/>
        <end position="336"/>
    </location>
</feature>
<feature type="strand" evidence="12">
    <location>
        <begin position="339"/>
        <end position="341"/>
    </location>
</feature>
<sequence length="362" mass="39092">MSRPQVTVHSLTGEATANALPLPAVFSAPIRPDIVHTVFTSVNKNKRQAYAVSEKAGHQTSAESWGTGRAVARIPRVGGGGTGRSGQGAFGNMCRGGRMFAPTKTWRKWNVKVNHNEKRYATASAIAATAVASLVLARGHRVEKIPEIPLVVSTDLESIQKTKEAVAALKAVGAHSDLLKVLKSKKLRAGKGKYRNRRWTQRRGPLVVYAEDNGIVKALRNVPGVETANVASLNLLQLAPGAHLGRFVIWTEAAFTKLDQVWGSETVASSKVGYTLPSHIISTSDVTRIINSSEIQSAIRPAGQATQKRTHVLKKNPLKNKQVLLRLNPYAKVFAAEKLGSKKAEKTGTKPAAVFTETLKHD</sequence>
<evidence type="ECO:0000269" key="1">
    <source>
    </source>
</evidence>
<evidence type="ECO:0000269" key="2">
    <source>
    </source>
</evidence>
<evidence type="ECO:0000269" key="3">
    <source>
    </source>
</evidence>
<evidence type="ECO:0000269" key="4">
    <source>
    </source>
</evidence>
<evidence type="ECO:0000269" key="5">
    <source>
    </source>
</evidence>
<evidence type="ECO:0000269" key="6">
    <source>
    </source>
</evidence>
<evidence type="ECO:0000303" key="7">
    <source>
    </source>
</evidence>
<evidence type="ECO:0000303" key="8">
    <source>
    </source>
</evidence>
<evidence type="ECO:0000305" key="9"/>
<evidence type="ECO:0000305" key="10">
    <source>
    </source>
</evidence>
<evidence type="ECO:0000305" key="11">
    <source>
    </source>
</evidence>
<evidence type="ECO:0007829" key="12">
    <source>
        <dbReference type="PDB" id="6EM3"/>
    </source>
</evidence>
<reference key="1">
    <citation type="journal article" date="1988" name="J. Biol. Chem.">
        <title>Ribosomal protein L2 in Saccharomyces cerevisiae is homologous to ribosomal protein L1 in Xenopus laevis. Isolation and characterization of the genes.</title>
        <authorList>
            <person name="Presutti C."/>
            <person name="Lucioli A."/>
            <person name="Bozzoni I."/>
        </authorList>
    </citation>
    <scope>NUCLEOTIDE SEQUENCE [GENOMIC DNA]</scope>
</reference>
<reference key="2">
    <citation type="journal article" date="1994" name="Yeast">
        <title>The complete sequence of a 33 kb fragment on the right arm of chromosome II from Saccharomyces cerevisiae reveals 16 open reading frames, including ten new open reading frames, five previously identified genes and a homologue of the SCO1 gene.</title>
        <authorList>
            <person name="Smits P.H.M."/>
            <person name="de Haan M."/>
            <person name="Maat C."/>
            <person name="Grivell L.A."/>
        </authorList>
    </citation>
    <scope>NUCLEOTIDE SEQUENCE [GENOMIC DNA]</scope>
    <source>
        <strain>ATCC 204508 / S288c</strain>
    </source>
</reference>
<reference key="3">
    <citation type="journal article" date="1994" name="EMBO J.">
        <title>Complete DNA sequence of yeast chromosome II.</title>
        <authorList>
            <person name="Feldmann H."/>
            <person name="Aigle M."/>
            <person name="Aljinovic G."/>
            <person name="Andre B."/>
            <person name="Baclet M.C."/>
            <person name="Barthe C."/>
            <person name="Baur A."/>
            <person name="Becam A.-M."/>
            <person name="Biteau N."/>
            <person name="Boles E."/>
            <person name="Brandt T."/>
            <person name="Brendel M."/>
            <person name="Brueckner M."/>
            <person name="Bussereau F."/>
            <person name="Christiansen C."/>
            <person name="Contreras R."/>
            <person name="Crouzet M."/>
            <person name="Cziepluch C."/>
            <person name="Demolis N."/>
            <person name="Delaveau T."/>
            <person name="Doignon F."/>
            <person name="Domdey H."/>
            <person name="Duesterhus S."/>
            <person name="Dubois E."/>
            <person name="Dujon B."/>
            <person name="El Bakkoury M."/>
            <person name="Entian K.-D."/>
            <person name="Feuermann M."/>
            <person name="Fiers W."/>
            <person name="Fobo G.M."/>
            <person name="Fritz C."/>
            <person name="Gassenhuber J."/>
            <person name="Glansdorff N."/>
            <person name="Goffeau A."/>
            <person name="Grivell L.A."/>
            <person name="de Haan M."/>
            <person name="Hein C."/>
            <person name="Herbert C.J."/>
            <person name="Hollenberg C.P."/>
            <person name="Holmstroem K."/>
            <person name="Jacq C."/>
            <person name="Jacquet M."/>
            <person name="Jauniaux J.-C."/>
            <person name="Jonniaux J.-L."/>
            <person name="Kallesoee T."/>
            <person name="Kiesau P."/>
            <person name="Kirchrath L."/>
            <person name="Koetter P."/>
            <person name="Korol S."/>
            <person name="Liebl S."/>
            <person name="Logghe M."/>
            <person name="Lohan A.J.E."/>
            <person name="Louis E.J."/>
            <person name="Li Z.Y."/>
            <person name="Maat M.J."/>
            <person name="Mallet L."/>
            <person name="Mannhaupt G."/>
            <person name="Messenguy F."/>
            <person name="Miosga T."/>
            <person name="Molemans F."/>
            <person name="Mueller S."/>
            <person name="Nasr F."/>
            <person name="Obermaier B."/>
            <person name="Perea J."/>
            <person name="Pierard A."/>
            <person name="Piravandi E."/>
            <person name="Pohl F.M."/>
            <person name="Pohl T.M."/>
            <person name="Potier S."/>
            <person name="Proft M."/>
            <person name="Purnelle B."/>
            <person name="Ramezani Rad M."/>
            <person name="Rieger M."/>
            <person name="Rose M."/>
            <person name="Schaaff-Gerstenschlaeger I."/>
            <person name="Scherens B."/>
            <person name="Schwarzlose C."/>
            <person name="Skala J."/>
            <person name="Slonimski P.P."/>
            <person name="Smits P.H.M."/>
            <person name="Souciet J.-L."/>
            <person name="Steensma H.Y."/>
            <person name="Stucka R."/>
            <person name="Urrestarazu L.A."/>
            <person name="van der Aart Q.J.M."/>
            <person name="Van Dyck L."/>
            <person name="Vassarotti A."/>
            <person name="Vetter I."/>
            <person name="Vierendeels F."/>
            <person name="Vissers S."/>
            <person name="Wagner G."/>
            <person name="de Wergifosse P."/>
            <person name="Wolfe K.H."/>
            <person name="Zagulski M."/>
            <person name="Zimmermann F.K."/>
            <person name="Mewes H.-W."/>
            <person name="Kleine K."/>
        </authorList>
    </citation>
    <scope>NUCLEOTIDE SEQUENCE [LARGE SCALE GENOMIC DNA]</scope>
    <source>
        <strain>ATCC 204508 / S288c</strain>
    </source>
</reference>
<reference key="4">
    <citation type="journal article" date="2014" name="G3 (Bethesda)">
        <title>The reference genome sequence of Saccharomyces cerevisiae: Then and now.</title>
        <authorList>
            <person name="Engel S.R."/>
            <person name="Dietrich F.S."/>
            <person name="Fisk D.G."/>
            <person name="Binkley G."/>
            <person name="Balakrishnan R."/>
            <person name="Costanzo M.C."/>
            <person name="Dwight S.S."/>
            <person name="Hitz B.C."/>
            <person name="Karra K."/>
            <person name="Nash R.S."/>
            <person name="Weng S."/>
            <person name="Wong E.D."/>
            <person name="Lloyd P."/>
            <person name="Skrzypek M.S."/>
            <person name="Miyasato S.R."/>
            <person name="Simison M."/>
            <person name="Cherry J.M."/>
        </authorList>
    </citation>
    <scope>GENOME REANNOTATION</scope>
    <source>
        <strain>ATCC 204508 / S288c</strain>
    </source>
</reference>
<reference key="5">
    <citation type="journal article" date="1991" name="EMBO J.">
        <title>The ribosomal protein L2 in S. cerevisiae controls the level of accumulation of its own mRNA.</title>
        <authorList>
            <person name="Presutti C."/>
            <person name="Ciafre S.-A."/>
            <person name="Bozzoni I."/>
        </authorList>
    </citation>
    <scope>FUNCTION IN L2 MRNA REGULATION</scope>
</reference>
<reference key="6">
    <citation type="journal article" date="1992" name="J. Biol. Chem.">
        <title>NH2-terminal acetylation of ribosomal proteins of Saccharomyces cerevisiae.</title>
        <authorList>
            <person name="Takakura H."/>
            <person name="Tsunasawa S."/>
            <person name="Miyagi M."/>
            <person name="Warner J.R."/>
        </authorList>
    </citation>
    <scope>PROTEIN SEQUENCE OF 2-21</scope>
    <scope>ACETYLATION AT SER-2 BY NATA</scope>
</reference>
<reference key="7">
    <citation type="journal article" date="1998" name="Yeast">
        <title>The list of cytoplasmic ribosomal proteins of Saccharomyces cerevisiae.</title>
        <authorList>
            <person name="Planta R.J."/>
            <person name="Mager W.H."/>
        </authorList>
    </citation>
    <scope>NOMENCLATURE</scope>
    <scope>SUBUNIT</scope>
</reference>
<reference key="8">
    <citation type="journal article" date="2003" name="Nature">
        <title>Global analysis of protein localization in budding yeast.</title>
        <authorList>
            <person name="Huh W.-K."/>
            <person name="Falvo J.V."/>
            <person name="Gerke L.C."/>
            <person name="Carroll A.S."/>
            <person name="Howson R.W."/>
            <person name="Weissman J.S."/>
            <person name="O'Shea E.K."/>
        </authorList>
    </citation>
    <scope>SUBCELLULAR LOCATION [LARGE SCALE ANALYSIS]</scope>
</reference>
<reference key="9">
    <citation type="journal article" date="2014" name="Curr. Opin. Struct. Biol.">
        <title>A new system for naming ribosomal proteins.</title>
        <authorList>
            <person name="Ban N."/>
            <person name="Beckmann R."/>
            <person name="Cate J.H.D."/>
            <person name="Dinman J.D."/>
            <person name="Dragon F."/>
            <person name="Ellis S.R."/>
            <person name="Lafontaine D.L.J."/>
            <person name="Lindahl L."/>
            <person name="Liljas A."/>
            <person name="Lipton J.M."/>
            <person name="McAlear M.A."/>
            <person name="Moore P.B."/>
            <person name="Noller H.F."/>
            <person name="Ortega J."/>
            <person name="Panse V.G."/>
            <person name="Ramakrishnan V."/>
            <person name="Spahn C.M.T."/>
            <person name="Steitz T.A."/>
            <person name="Tchorzewski M."/>
            <person name="Tollervey D."/>
            <person name="Warren A.J."/>
            <person name="Williamson J.R."/>
            <person name="Wilson D."/>
            <person name="Yonath A."/>
            <person name="Yusupov M."/>
        </authorList>
    </citation>
    <scope>NOMENCLATURE</scope>
</reference>
<reference key="10">
    <citation type="journal article" date="2015" name="Mol. Cell">
        <title>Coordinated ribosomal L4 protein assembly into the pre-ribosome is regulated by its eukaryote-specific extension.</title>
        <authorList>
            <person name="Stelter P."/>
            <person name="Huber F.M."/>
            <person name="Kunze R."/>
            <person name="Flemming D."/>
            <person name="Hoelz A."/>
            <person name="Hurt E."/>
        </authorList>
    </citation>
    <scope>SUBUNIT</scope>
    <scope>INTERACTION WITH ACL4 AND KAP104</scope>
    <scope>DOMAIN</scope>
    <scope>SUBCELLULAR LOCATION</scope>
    <scope>MUTAGENESIS OF ARG-95; ARG-98; ILE-289; ILE-290; ILE-295; LYS-314; LYS-315; LYS-319; LYS-332 AND PHE-334</scope>
</reference>
<reference key="11">
    <citation type="journal article" date="2015" name="Proteomics">
        <title>Expanding the yeast protein arginine methylome.</title>
        <authorList>
            <person name="Plank M."/>
            <person name="Fischer R."/>
            <person name="Geoghegan V."/>
            <person name="Charles P.D."/>
            <person name="Konietzny R."/>
            <person name="Acuto O."/>
            <person name="Pears C."/>
            <person name="Schofield C.J."/>
            <person name="Kessler B.M."/>
        </authorList>
    </citation>
    <scope>METHYLATION AT ARG-95</scope>
</reference>
<reference key="12">
    <citation type="journal article" date="2001" name="Cell">
        <title>Structure of the 80S ribosome from Saccharomyces cerevisiae -- tRNA-ribosome and subunit-subunit interactions.</title>
        <authorList>
            <person name="Spahn C.M.T."/>
            <person name="Beckmann R."/>
            <person name="Eswar N."/>
            <person name="Penczek P.A."/>
            <person name="Sali A."/>
            <person name="Blobel G."/>
            <person name="Frank J."/>
        </authorList>
    </citation>
    <scope>3D-STRUCTURE MODELING OF 5-260</scope>
    <scope>ELECTRON MICROSCOPY</scope>
</reference>
<reference key="13">
    <citation type="journal article" date="2010" name="Science">
        <title>Crystal structure of the eukaryotic ribosome.</title>
        <authorList>
            <person name="Ben-Shem A."/>
            <person name="Jenner L."/>
            <person name="Yusupova G."/>
            <person name="Yusupov M."/>
        </authorList>
    </citation>
    <scope>X-RAY CRYSTALLOGRAPHY (4.0 ANGSTROMS) OF 80S RIBOSOME</scope>
</reference>
<reference key="14">
    <citation type="journal article" date="2011" name="Science">
        <title>The structure of the eukaryotic ribosome at 3.0 A resolution.</title>
        <authorList>
            <person name="Ben-Shem A."/>
            <person name="Garreau de Loubresse N."/>
            <person name="Melnikov S."/>
            <person name="Jenner L."/>
            <person name="Yusupova G."/>
            <person name="Yusupov M."/>
        </authorList>
    </citation>
    <scope>X-RAY CRYSTALLOGRAPHY (3.0 ANGSTROMS) OF 80S RIBOSOME</scope>
    <scope>SUBUNIT</scope>
    <scope>SUBCELLULAR LOCATION</scope>
</reference>
<organism>
    <name type="scientific">Saccharomyces cerevisiae (strain ATCC 204508 / S288c)</name>
    <name type="common">Baker's yeast</name>
    <dbReference type="NCBI Taxonomy" id="559292"/>
    <lineage>
        <taxon>Eukaryota</taxon>
        <taxon>Fungi</taxon>
        <taxon>Dikarya</taxon>
        <taxon>Ascomycota</taxon>
        <taxon>Saccharomycotina</taxon>
        <taxon>Saccharomycetes</taxon>
        <taxon>Saccharomycetales</taxon>
        <taxon>Saccharomycetaceae</taxon>
        <taxon>Saccharomyces</taxon>
    </lineage>
</organism>
<proteinExistence type="evidence at protein level"/>
<name>RL4A_YEAST</name>
<gene>
    <name evidence="8" type="primary">RPL4A</name>
    <name type="synonym">RPL2</name>
    <name type="synonym">RPL2A</name>
    <name type="ordered locus">YBR031W</name>
    <name type="ORF">YBR0315</name>
</gene>
<protein>
    <recommendedName>
        <fullName evidence="7">Large ribosomal subunit protein uL4A</fullName>
    </recommendedName>
    <alternativeName>
        <fullName evidence="8">60S ribosomal protein L4-A</fullName>
    </alternativeName>
    <alternativeName>
        <fullName>L2</fullName>
    </alternativeName>
    <alternativeName>
        <fullName>RP2</fullName>
    </alternativeName>
    <alternativeName>
        <fullName>YL2</fullName>
    </alternativeName>
</protein>
<dbReference type="EMBL" id="X76078">
    <property type="protein sequence ID" value="CAA53687.1"/>
    <property type="molecule type" value="Genomic_DNA"/>
</dbReference>
<dbReference type="EMBL" id="J03195">
    <property type="protein sequence ID" value="AAA34974.1"/>
    <property type="molecule type" value="Genomic_DNA"/>
</dbReference>
<dbReference type="EMBL" id="Z35900">
    <property type="protein sequence ID" value="CAA84973.1"/>
    <property type="molecule type" value="Genomic_DNA"/>
</dbReference>
<dbReference type="EMBL" id="BK006936">
    <property type="protein sequence ID" value="DAA07152.1"/>
    <property type="molecule type" value="Genomic_DNA"/>
</dbReference>
<dbReference type="PIR" id="S45887">
    <property type="entry name" value="S45887"/>
</dbReference>
<dbReference type="RefSeq" id="NP_009587.1">
    <property type="nucleotide sequence ID" value="NM_001178379.1"/>
</dbReference>
<dbReference type="PDB" id="3J6X">
    <property type="method" value="EM"/>
    <property type="resolution" value="6.10 A"/>
    <property type="chains" value="L4=1-362"/>
</dbReference>
<dbReference type="PDB" id="3J6Y">
    <property type="method" value="EM"/>
    <property type="resolution" value="6.10 A"/>
    <property type="chains" value="L4=1-362"/>
</dbReference>
<dbReference type="PDB" id="3J77">
    <property type="method" value="EM"/>
    <property type="resolution" value="6.20 A"/>
    <property type="chains" value="L4=1-362"/>
</dbReference>
<dbReference type="PDB" id="3J78">
    <property type="method" value="EM"/>
    <property type="resolution" value="6.30 A"/>
    <property type="chains" value="L4=1-362"/>
</dbReference>
<dbReference type="PDB" id="3JCT">
    <property type="method" value="EM"/>
    <property type="resolution" value="3.08 A"/>
    <property type="chains" value="C=1-362"/>
</dbReference>
<dbReference type="PDB" id="4U3M">
    <property type="method" value="X-ray"/>
    <property type="resolution" value="3.00 A"/>
    <property type="chains" value="L4/l4=2-362"/>
</dbReference>
<dbReference type="PDB" id="4U3N">
    <property type="method" value="X-ray"/>
    <property type="resolution" value="3.20 A"/>
    <property type="chains" value="L4/l4=2-362"/>
</dbReference>
<dbReference type="PDB" id="4U3U">
    <property type="method" value="X-ray"/>
    <property type="resolution" value="2.90 A"/>
    <property type="chains" value="L4/l4=2-362"/>
</dbReference>
<dbReference type="PDB" id="4U4N">
    <property type="method" value="X-ray"/>
    <property type="resolution" value="3.10 A"/>
    <property type="chains" value="L4/l4=2-362"/>
</dbReference>
<dbReference type="PDB" id="4U4O">
    <property type="method" value="X-ray"/>
    <property type="resolution" value="3.60 A"/>
    <property type="chains" value="L4/l4=2-362"/>
</dbReference>
<dbReference type="PDB" id="4U4Q">
    <property type="method" value="X-ray"/>
    <property type="resolution" value="3.00 A"/>
    <property type="chains" value="L4/l4=2-362"/>
</dbReference>
<dbReference type="PDB" id="4U4R">
    <property type="method" value="X-ray"/>
    <property type="resolution" value="2.80 A"/>
    <property type="chains" value="L4/l4=2-362"/>
</dbReference>
<dbReference type="PDB" id="4U4U">
    <property type="method" value="X-ray"/>
    <property type="resolution" value="3.00 A"/>
    <property type="chains" value="L4/l4=2-362"/>
</dbReference>
<dbReference type="PDB" id="4U4Y">
    <property type="method" value="X-ray"/>
    <property type="resolution" value="3.20 A"/>
    <property type="chains" value="L4/l4=2-362"/>
</dbReference>
<dbReference type="PDB" id="4U4Z">
    <property type="method" value="X-ray"/>
    <property type="resolution" value="3.10 A"/>
    <property type="chains" value="L4/l4=2-362"/>
</dbReference>
<dbReference type="PDB" id="4U50">
    <property type="method" value="X-ray"/>
    <property type="resolution" value="3.20 A"/>
    <property type="chains" value="L4/l4=2-362"/>
</dbReference>
<dbReference type="PDB" id="4U51">
    <property type="method" value="X-ray"/>
    <property type="resolution" value="3.20 A"/>
    <property type="chains" value="L4/l4=2-362"/>
</dbReference>
<dbReference type="PDB" id="4U52">
    <property type="method" value="X-ray"/>
    <property type="resolution" value="3.00 A"/>
    <property type="chains" value="L4/l4=2-362"/>
</dbReference>
<dbReference type="PDB" id="4U53">
    <property type="method" value="X-ray"/>
    <property type="resolution" value="3.30 A"/>
    <property type="chains" value="L4/l4=2-362"/>
</dbReference>
<dbReference type="PDB" id="4U55">
    <property type="method" value="X-ray"/>
    <property type="resolution" value="3.20 A"/>
    <property type="chains" value="L4/l4=2-362"/>
</dbReference>
<dbReference type="PDB" id="4U56">
    <property type="method" value="X-ray"/>
    <property type="resolution" value="3.45 A"/>
    <property type="chains" value="L4/l4=2-362"/>
</dbReference>
<dbReference type="PDB" id="4U6F">
    <property type="method" value="X-ray"/>
    <property type="resolution" value="3.10 A"/>
    <property type="chains" value="L4/l4=2-362"/>
</dbReference>
<dbReference type="PDB" id="4V5Z">
    <property type="method" value="EM"/>
    <property type="resolution" value="8.70 A"/>
    <property type="chains" value="Bc=2-332"/>
</dbReference>
<dbReference type="PDB" id="4V6I">
    <property type="method" value="EM"/>
    <property type="resolution" value="8.80 A"/>
    <property type="chains" value="BD=1-362"/>
</dbReference>
<dbReference type="PDB" id="4V7F">
    <property type="method" value="EM"/>
    <property type="resolution" value="8.70 A"/>
    <property type="chains" value="D=1-362"/>
</dbReference>
<dbReference type="PDB" id="4V7R">
    <property type="method" value="X-ray"/>
    <property type="resolution" value="4.00 A"/>
    <property type="chains" value="BD/DD=1-362"/>
</dbReference>
<dbReference type="PDB" id="4V88">
    <property type="method" value="X-ray"/>
    <property type="resolution" value="3.00 A"/>
    <property type="chains" value="BC/DC=1-362"/>
</dbReference>
<dbReference type="PDB" id="4V8T">
    <property type="method" value="EM"/>
    <property type="resolution" value="8.10 A"/>
    <property type="chains" value="C=1-362"/>
</dbReference>
<dbReference type="PDB" id="4V8Y">
    <property type="method" value="EM"/>
    <property type="resolution" value="4.30 A"/>
    <property type="chains" value="BC=2-362"/>
</dbReference>
<dbReference type="PDB" id="4V8Z">
    <property type="method" value="EM"/>
    <property type="resolution" value="6.60 A"/>
    <property type="chains" value="BC=2-362"/>
</dbReference>
<dbReference type="PDB" id="4V91">
    <property type="method" value="EM"/>
    <property type="resolution" value="3.70 A"/>
    <property type="chains" value="C=1-362"/>
</dbReference>
<dbReference type="PDB" id="5APN">
    <property type="method" value="EM"/>
    <property type="resolution" value="3.91 A"/>
    <property type="chains" value="C=1-362"/>
</dbReference>
<dbReference type="PDB" id="5APO">
    <property type="method" value="EM"/>
    <property type="resolution" value="3.41 A"/>
    <property type="chains" value="C=1-362"/>
</dbReference>
<dbReference type="PDB" id="5DAT">
    <property type="method" value="X-ray"/>
    <property type="resolution" value="3.15 A"/>
    <property type="chains" value="L4/l4=2-362"/>
</dbReference>
<dbReference type="PDB" id="5DC3">
    <property type="method" value="X-ray"/>
    <property type="resolution" value="3.25 A"/>
    <property type="chains" value="L4/l4=2-362"/>
</dbReference>
<dbReference type="PDB" id="5DGE">
    <property type="method" value="X-ray"/>
    <property type="resolution" value="3.45 A"/>
    <property type="chains" value="L4/l4=2-362"/>
</dbReference>
<dbReference type="PDB" id="5DGF">
    <property type="method" value="X-ray"/>
    <property type="resolution" value="3.30 A"/>
    <property type="chains" value="L4/l4=2-362"/>
</dbReference>
<dbReference type="PDB" id="5DGV">
    <property type="method" value="X-ray"/>
    <property type="resolution" value="3.10 A"/>
    <property type="chains" value="L4/l4=2-362"/>
</dbReference>
<dbReference type="PDB" id="5FCI">
    <property type="method" value="X-ray"/>
    <property type="resolution" value="3.40 A"/>
    <property type="chains" value="L4/l4=2-362"/>
</dbReference>
<dbReference type="PDB" id="5FCJ">
    <property type="method" value="X-ray"/>
    <property type="resolution" value="3.10 A"/>
    <property type="chains" value="L4/l4=2-362"/>
</dbReference>
<dbReference type="PDB" id="5GAK">
    <property type="method" value="EM"/>
    <property type="resolution" value="3.88 A"/>
    <property type="chains" value="G=1-362"/>
</dbReference>
<dbReference type="PDB" id="5H4P">
    <property type="method" value="EM"/>
    <property type="resolution" value="3.07 A"/>
    <property type="chains" value="C=2-362"/>
</dbReference>
<dbReference type="PDB" id="5I4L">
    <property type="method" value="X-ray"/>
    <property type="resolution" value="3.10 A"/>
    <property type="chains" value="L4/l4=2-362"/>
</dbReference>
<dbReference type="PDB" id="5JCS">
    <property type="method" value="EM"/>
    <property type="resolution" value="9.50 A"/>
    <property type="chains" value="C=1-362"/>
</dbReference>
<dbReference type="PDB" id="5JUO">
    <property type="method" value="EM"/>
    <property type="resolution" value="4.00 A"/>
    <property type="chains" value="H=1-362"/>
</dbReference>
<dbReference type="PDB" id="5JUP">
    <property type="method" value="EM"/>
    <property type="resolution" value="3.50 A"/>
    <property type="chains" value="H=1-362"/>
</dbReference>
<dbReference type="PDB" id="5JUS">
    <property type="method" value="EM"/>
    <property type="resolution" value="4.20 A"/>
    <property type="chains" value="H=1-362"/>
</dbReference>
<dbReference type="PDB" id="5JUT">
    <property type="method" value="EM"/>
    <property type="resolution" value="4.00 A"/>
    <property type="chains" value="H=1-362"/>
</dbReference>
<dbReference type="PDB" id="5JUU">
    <property type="method" value="EM"/>
    <property type="resolution" value="4.00 A"/>
    <property type="chains" value="H=1-362"/>
</dbReference>
<dbReference type="PDB" id="5LYB">
    <property type="method" value="X-ray"/>
    <property type="resolution" value="3.25 A"/>
    <property type="chains" value="L4/l4=2-362"/>
</dbReference>
<dbReference type="PDB" id="5M1J">
    <property type="method" value="EM"/>
    <property type="resolution" value="3.30 A"/>
    <property type="chains" value="C5=2-362"/>
</dbReference>
<dbReference type="PDB" id="5MC6">
    <property type="method" value="EM"/>
    <property type="resolution" value="3.80 A"/>
    <property type="chains" value="BE=1-362"/>
</dbReference>
<dbReference type="PDB" id="5MEI">
    <property type="method" value="X-ray"/>
    <property type="resolution" value="3.50 A"/>
    <property type="chains" value="CF/l=2-362"/>
</dbReference>
<dbReference type="PDB" id="5NDG">
    <property type="method" value="X-ray"/>
    <property type="resolution" value="3.70 A"/>
    <property type="chains" value="L4/l4=2-362"/>
</dbReference>
<dbReference type="PDB" id="5NDV">
    <property type="method" value="X-ray"/>
    <property type="resolution" value="3.30 A"/>
    <property type="chains" value="L4/l4=2-362"/>
</dbReference>
<dbReference type="PDB" id="5NDW">
    <property type="method" value="X-ray"/>
    <property type="resolution" value="3.70 A"/>
    <property type="chains" value="L4/l4=2-362"/>
</dbReference>
<dbReference type="PDB" id="5OBM">
    <property type="method" value="X-ray"/>
    <property type="resolution" value="3.40 A"/>
    <property type="chains" value="L4/l4=2-362"/>
</dbReference>
<dbReference type="PDB" id="5ON6">
    <property type="method" value="X-ray"/>
    <property type="resolution" value="3.10 A"/>
    <property type="chains" value="CF/l=2-362"/>
</dbReference>
<dbReference type="PDB" id="5T62">
    <property type="method" value="EM"/>
    <property type="resolution" value="3.30 A"/>
    <property type="chains" value="F=1-362"/>
</dbReference>
<dbReference type="PDB" id="5T6R">
    <property type="method" value="EM"/>
    <property type="resolution" value="4.50 A"/>
    <property type="chains" value="F=1-362"/>
</dbReference>
<dbReference type="PDB" id="5TBW">
    <property type="method" value="X-ray"/>
    <property type="resolution" value="3.00 A"/>
    <property type="chains" value="CF/l=2-362"/>
</dbReference>
<dbReference type="PDB" id="5TGA">
    <property type="method" value="X-ray"/>
    <property type="resolution" value="3.30 A"/>
    <property type="chains" value="L4/l4=2-362"/>
</dbReference>
<dbReference type="PDB" id="5TGM">
    <property type="method" value="X-ray"/>
    <property type="resolution" value="3.50 A"/>
    <property type="chains" value="L4/l4=2-362"/>
</dbReference>
<dbReference type="PDB" id="5Z3G">
    <property type="method" value="EM"/>
    <property type="resolution" value="3.65 A"/>
    <property type="chains" value="G=1-362"/>
</dbReference>
<dbReference type="PDB" id="6C0F">
    <property type="method" value="EM"/>
    <property type="resolution" value="3.70 A"/>
    <property type="chains" value="C=1-362"/>
</dbReference>
<dbReference type="PDB" id="6CB1">
    <property type="method" value="EM"/>
    <property type="resolution" value="4.60 A"/>
    <property type="chains" value="C=1-362"/>
</dbReference>
<dbReference type="PDB" id="6ELZ">
    <property type="method" value="EM"/>
    <property type="resolution" value="3.30 A"/>
    <property type="chains" value="C=1-362"/>
</dbReference>
<dbReference type="PDB" id="6EM1">
    <property type="method" value="EM"/>
    <property type="resolution" value="3.60 A"/>
    <property type="chains" value="C=1-362"/>
</dbReference>
<dbReference type="PDB" id="6EM3">
    <property type="method" value="EM"/>
    <property type="resolution" value="3.20 A"/>
    <property type="chains" value="C=1-362"/>
</dbReference>
<dbReference type="PDB" id="6EM4">
    <property type="method" value="EM"/>
    <property type="resolution" value="4.10 A"/>
    <property type="chains" value="C=1-362"/>
</dbReference>
<dbReference type="PDB" id="6EM5">
    <property type="method" value="EM"/>
    <property type="resolution" value="4.30 A"/>
    <property type="chains" value="C=1-362"/>
</dbReference>
<dbReference type="PDB" id="6FT6">
    <property type="method" value="EM"/>
    <property type="resolution" value="3.90 A"/>
    <property type="chains" value="C=1-362"/>
</dbReference>
<dbReference type="PDB" id="6GQ1">
    <property type="method" value="EM"/>
    <property type="resolution" value="4.40 A"/>
    <property type="chains" value="C=2-362"/>
</dbReference>
<dbReference type="PDB" id="6GQB">
    <property type="method" value="EM"/>
    <property type="resolution" value="3.90 A"/>
    <property type="chains" value="C=2-362"/>
</dbReference>
<dbReference type="PDB" id="6GQV">
    <property type="method" value="EM"/>
    <property type="resolution" value="4.00 A"/>
    <property type="chains" value="C=2-362"/>
</dbReference>
<dbReference type="PDB" id="6HD7">
    <property type="method" value="EM"/>
    <property type="resolution" value="3.40 A"/>
    <property type="chains" value="G=1-362"/>
</dbReference>
<dbReference type="PDB" id="6HHQ">
    <property type="method" value="X-ray"/>
    <property type="resolution" value="3.10 A"/>
    <property type="chains" value="CF/l=1-362"/>
</dbReference>
<dbReference type="PDB" id="6I7O">
    <property type="method" value="EM"/>
    <property type="resolution" value="5.30 A"/>
    <property type="chains" value="BE/YE=2-362"/>
</dbReference>
<dbReference type="PDB" id="6M62">
    <property type="method" value="EM"/>
    <property type="resolution" value="3.20 A"/>
    <property type="chains" value="C=1-362"/>
</dbReference>
<dbReference type="PDB" id="6N8J">
    <property type="method" value="EM"/>
    <property type="resolution" value="3.50 A"/>
    <property type="chains" value="C=1-362"/>
</dbReference>
<dbReference type="PDB" id="6N8K">
    <property type="method" value="EM"/>
    <property type="resolution" value="3.60 A"/>
    <property type="chains" value="C=1-362"/>
</dbReference>
<dbReference type="PDB" id="6N8L">
    <property type="method" value="EM"/>
    <property type="resolution" value="3.60 A"/>
    <property type="chains" value="C=1-362"/>
</dbReference>
<dbReference type="PDB" id="6N8M">
    <property type="method" value="EM"/>
    <property type="resolution" value="3.50 A"/>
    <property type="chains" value="F=1-362"/>
</dbReference>
<dbReference type="PDB" id="6N8N">
    <property type="method" value="EM"/>
    <property type="resolution" value="3.80 A"/>
    <property type="chains" value="F=1-362"/>
</dbReference>
<dbReference type="PDB" id="6N8O">
    <property type="method" value="EM"/>
    <property type="resolution" value="3.50 A"/>
    <property type="chains" value="F=1-362"/>
</dbReference>
<dbReference type="PDB" id="6OIG">
    <property type="method" value="EM"/>
    <property type="resolution" value="3.80 A"/>
    <property type="chains" value="C=2-362"/>
</dbReference>
<dbReference type="PDB" id="6Q8Y">
    <property type="method" value="EM"/>
    <property type="resolution" value="3.10 A"/>
    <property type="chains" value="BE=2-362"/>
</dbReference>
<dbReference type="PDB" id="6QIK">
    <property type="method" value="EM"/>
    <property type="resolution" value="3.10 A"/>
    <property type="chains" value="D=1-362"/>
</dbReference>
<dbReference type="PDB" id="6QT0">
    <property type="method" value="EM"/>
    <property type="resolution" value="3.40 A"/>
    <property type="chains" value="D=1-362"/>
</dbReference>
<dbReference type="PDB" id="6QTZ">
    <property type="method" value="EM"/>
    <property type="resolution" value="3.50 A"/>
    <property type="chains" value="D=1-362"/>
</dbReference>
<dbReference type="PDB" id="6R84">
    <property type="method" value="EM"/>
    <property type="resolution" value="3.60 A"/>
    <property type="chains" value="G=2-362"/>
</dbReference>
<dbReference type="PDB" id="6R86">
    <property type="method" value="EM"/>
    <property type="resolution" value="3.40 A"/>
    <property type="chains" value="G=2-362"/>
</dbReference>
<dbReference type="PDB" id="6R87">
    <property type="method" value="EM"/>
    <property type="resolution" value="3.40 A"/>
    <property type="chains" value="G=2-362"/>
</dbReference>
<dbReference type="PDB" id="6RI5">
    <property type="method" value="EM"/>
    <property type="resolution" value="3.30 A"/>
    <property type="chains" value="D=1-362"/>
</dbReference>
<dbReference type="PDB" id="6RZZ">
    <property type="method" value="EM"/>
    <property type="resolution" value="3.20 A"/>
    <property type="chains" value="D=1-362"/>
</dbReference>
<dbReference type="PDB" id="6S05">
    <property type="method" value="EM"/>
    <property type="resolution" value="3.90 A"/>
    <property type="chains" value="D=1-362"/>
</dbReference>
<dbReference type="PDB" id="6S47">
    <property type="method" value="EM"/>
    <property type="resolution" value="3.28 A"/>
    <property type="chains" value="AF=2-362"/>
</dbReference>
<dbReference type="PDB" id="6SNT">
    <property type="method" value="EM"/>
    <property type="resolution" value="2.80 A"/>
    <property type="chains" value="j=1-362"/>
</dbReference>
<dbReference type="PDB" id="6SV4">
    <property type="method" value="EM"/>
    <property type="resolution" value="3.30 A"/>
    <property type="chains" value="BE/YE/ZE=1-362"/>
</dbReference>
<dbReference type="PDB" id="6T4Q">
    <property type="method" value="EM"/>
    <property type="resolution" value="2.60 A"/>
    <property type="chains" value="LC=2-362"/>
</dbReference>
<dbReference type="PDB" id="6T7I">
    <property type="method" value="EM"/>
    <property type="resolution" value="3.20 A"/>
    <property type="chains" value="LC=1-362"/>
</dbReference>
<dbReference type="PDB" id="6T7T">
    <property type="method" value="EM"/>
    <property type="resolution" value="3.10 A"/>
    <property type="chains" value="LC=1-362"/>
</dbReference>
<dbReference type="PDB" id="6T83">
    <property type="method" value="EM"/>
    <property type="resolution" value="4.00 A"/>
    <property type="chains" value="Cy/Fa=1-362"/>
</dbReference>
<dbReference type="PDB" id="6TB3">
    <property type="method" value="EM"/>
    <property type="resolution" value="2.80 A"/>
    <property type="chains" value="BE=2-362"/>
</dbReference>
<dbReference type="PDB" id="6TNU">
    <property type="method" value="EM"/>
    <property type="resolution" value="3.10 A"/>
    <property type="chains" value="BE=2-362"/>
</dbReference>
<dbReference type="PDB" id="6WOO">
    <property type="method" value="EM"/>
    <property type="resolution" value="2.90 A"/>
    <property type="chains" value="C=3-361"/>
</dbReference>
<dbReference type="PDB" id="6YLG">
    <property type="method" value="EM"/>
    <property type="resolution" value="3.00 A"/>
    <property type="chains" value="C=1-362"/>
</dbReference>
<dbReference type="PDB" id="6YLH">
    <property type="method" value="EM"/>
    <property type="resolution" value="3.10 A"/>
    <property type="chains" value="C=1-362"/>
</dbReference>
<dbReference type="PDB" id="6YLX">
    <property type="method" value="EM"/>
    <property type="resolution" value="3.90 A"/>
    <property type="chains" value="C=1-362"/>
</dbReference>
<dbReference type="PDB" id="6YLY">
    <property type="method" value="EM"/>
    <property type="resolution" value="3.80 A"/>
    <property type="chains" value="C=1-362"/>
</dbReference>
<dbReference type="PDB" id="6Z6J">
    <property type="method" value="EM"/>
    <property type="resolution" value="3.40 A"/>
    <property type="chains" value="LC=1-362"/>
</dbReference>
<dbReference type="PDB" id="6Z6K">
    <property type="method" value="EM"/>
    <property type="resolution" value="3.40 A"/>
    <property type="chains" value="LC=1-362"/>
</dbReference>
<dbReference type="PDB" id="7AZY">
    <property type="method" value="EM"/>
    <property type="resolution" value="2.88 A"/>
    <property type="chains" value="p=1-362"/>
</dbReference>
<dbReference type="PDB" id="7B7D">
    <property type="method" value="EM"/>
    <property type="resolution" value="3.30 A"/>
    <property type="chains" value="LF=2-362"/>
</dbReference>
<dbReference type="PDB" id="7BT6">
    <property type="method" value="EM"/>
    <property type="resolution" value="3.12 A"/>
    <property type="chains" value="C=1-362"/>
</dbReference>
<dbReference type="PDB" id="7BTB">
    <property type="method" value="EM"/>
    <property type="resolution" value="3.22 A"/>
    <property type="chains" value="C=1-362"/>
</dbReference>
<dbReference type="PDB" id="7MPI">
    <property type="method" value="EM"/>
    <property type="resolution" value="3.05 A"/>
    <property type="chains" value="AC=2-362"/>
</dbReference>
<dbReference type="PDB" id="7MPJ">
    <property type="method" value="EM"/>
    <property type="resolution" value="2.70 A"/>
    <property type="chains" value="AC=2-362"/>
</dbReference>
<dbReference type="PDB" id="7N8B">
    <property type="method" value="EM"/>
    <property type="resolution" value="3.05 A"/>
    <property type="chains" value="AC=2-362"/>
</dbReference>
<dbReference type="PDB" id="7NAC">
    <property type="method" value="EM"/>
    <property type="resolution" value="3.04 A"/>
    <property type="chains" value="C=1-362"/>
</dbReference>
<dbReference type="PDB" id="7NRC">
    <property type="method" value="EM"/>
    <property type="resolution" value="3.90 A"/>
    <property type="chains" value="LF=2-362"/>
</dbReference>
<dbReference type="PDB" id="7NRD">
    <property type="method" value="EM"/>
    <property type="resolution" value="4.36 A"/>
    <property type="chains" value="LF=2-362"/>
</dbReference>
<dbReference type="PDB" id="7OF1">
    <property type="method" value="EM"/>
    <property type="resolution" value="3.10 A"/>
    <property type="chains" value="C=1-362"/>
</dbReference>
<dbReference type="PDB" id="7OH3">
    <property type="method" value="EM"/>
    <property type="resolution" value="3.40 A"/>
    <property type="chains" value="C=1-362"/>
</dbReference>
<dbReference type="PDB" id="7OHP">
    <property type="method" value="EM"/>
    <property type="resolution" value="3.90 A"/>
    <property type="chains" value="C=1-362"/>
</dbReference>
<dbReference type="PDB" id="7OHQ">
    <property type="method" value="EM"/>
    <property type="resolution" value="3.10 A"/>
    <property type="chains" value="C=1-362"/>
</dbReference>
<dbReference type="PDB" id="7OHR">
    <property type="method" value="EM"/>
    <property type="resolution" value="4.72 A"/>
    <property type="chains" value="C=1-362"/>
</dbReference>
<dbReference type="PDB" id="7OHS">
    <property type="method" value="EM"/>
    <property type="resolution" value="4.38 A"/>
    <property type="chains" value="C=1-362"/>
</dbReference>
<dbReference type="PDB" id="7OHT">
    <property type="method" value="EM"/>
    <property type="resolution" value="4.70 A"/>
    <property type="chains" value="C=1-362"/>
</dbReference>
<dbReference type="PDB" id="7OHU">
    <property type="method" value="EM"/>
    <property type="resolution" value="3.70 A"/>
    <property type="chains" value="C=1-362"/>
</dbReference>
<dbReference type="PDB" id="7OHV">
    <property type="method" value="EM"/>
    <property type="resolution" value="3.90 A"/>
    <property type="chains" value="C=1-362"/>
</dbReference>
<dbReference type="PDB" id="7OHW">
    <property type="method" value="EM"/>
    <property type="resolution" value="3.50 A"/>
    <property type="chains" value="C=1-362"/>
</dbReference>
<dbReference type="PDB" id="7OHX">
    <property type="method" value="EM"/>
    <property type="resolution" value="3.30 A"/>
    <property type="chains" value="C=1-362"/>
</dbReference>
<dbReference type="PDB" id="7OHY">
    <property type="method" value="EM"/>
    <property type="resolution" value="3.90 A"/>
    <property type="chains" value="C=1-362"/>
</dbReference>
<dbReference type="PDB" id="7R7A">
    <property type="method" value="EM"/>
    <property type="resolution" value="3.04 A"/>
    <property type="chains" value="C=1-362"/>
</dbReference>
<dbReference type="PDB" id="7U0H">
    <property type="method" value="EM"/>
    <property type="resolution" value="2.76 A"/>
    <property type="chains" value="C=1-362"/>
</dbReference>
<dbReference type="PDB" id="7UG6">
    <property type="method" value="EM"/>
    <property type="resolution" value="2.90 A"/>
    <property type="chains" value="C=1-362"/>
</dbReference>
<dbReference type="PDB" id="7UOO">
    <property type="method" value="EM"/>
    <property type="resolution" value="2.34 A"/>
    <property type="chains" value="C=1-362"/>
</dbReference>
<dbReference type="PDB" id="7UQB">
    <property type="method" value="EM"/>
    <property type="resolution" value="2.43 A"/>
    <property type="chains" value="C=1-362"/>
</dbReference>
<dbReference type="PDB" id="7UQZ">
    <property type="method" value="EM"/>
    <property type="resolution" value="2.44 A"/>
    <property type="chains" value="C=1-362"/>
</dbReference>
<dbReference type="PDB" id="7V08">
    <property type="method" value="EM"/>
    <property type="resolution" value="2.36 A"/>
    <property type="chains" value="C=1-362"/>
</dbReference>
<dbReference type="PDB" id="7Z34">
    <property type="method" value="EM"/>
    <property type="resolution" value="3.80 A"/>
    <property type="chains" value="C=1-362"/>
</dbReference>
<dbReference type="PDB" id="7ZPQ">
    <property type="method" value="EM"/>
    <property type="resolution" value="3.47 A"/>
    <property type="chains" value="BC=2-362"/>
</dbReference>
<dbReference type="PDB" id="7ZRS">
    <property type="method" value="EM"/>
    <property type="resolution" value="4.80 A"/>
    <property type="chains" value="BC=2-362"/>
</dbReference>
<dbReference type="PDB" id="7ZS5">
    <property type="method" value="EM"/>
    <property type="resolution" value="3.20 A"/>
    <property type="chains" value="BE=2-362"/>
</dbReference>
<dbReference type="PDB" id="7ZUW">
    <property type="method" value="EM"/>
    <property type="resolution" value="4.30 A"/>
    <property type="chains" value="BC=2-362"/>
</dbReference>
<dbReference type="PDB" id="7ZUX">
    <property type="method" value="EM"/>
    <property type="resolution" value="2.50 A"/>
    <property type="chains" value="EC=2-362"/>
</dbReference>
<dbReference type="PDB" id="7ZW0">
    <property type="method" value="EM"/>
    <property type="resolution" value="2.40 A"/>
    <property type="chains" value="LG=1-362"/>
</dbReference>
<dbReference type="PDB" id="8AAF">
    <property type="method" value="EM"/>
    <property type="resolution" value="2.50 A"/>
    <property type="chains" value="l=1-362"/>
</dbReference>
<dbReference type="PDB" id="8AGT">
    <property type="method" value="EM"/>
    <property type="resolution" value="2.60 A"/>
    <property type="chains" value="l=1-362"/>
</dbReference>
<dbReference type="PDB" id="8AGU">
    <property type="method" value="EM"/>
    <property type="resolution" value="2.70 A"/>
    <property type="chains" value="l=1-362"/>
</dbReference>
<dbReference type="PDB" id="8AGV">
    <property type="method" value="EM"/>
    <property type="resolution" value="2.60 A"/>
    <property type="chains" value="l=1-362"/>
</dbReference>
<dbReference type="PDB" id="8AGW">
    <property type="method" value="EM"/>
    <property type="resolution" value="2.60 A"/>
    <property type="chains" value="l=1-362"/>
</dbReference>
<dbReference type="PDB" id="8AGX">
    <property type="method" value="EM"/>
    <property type="resolution" value="2.40 A"/>
    <property type="chains" value="l=1-362"/>
</dbReference>
<dbReference type="PDB" id="8AGZ">
    <property type="method" value="EM"/>
    <property type="resolution" value="2.60 A"/>
    <property type="chains" value="l=1-362"/>
</dbReference>
<dbReference type="PDB" id="8BIP">
    <property type="method" value="EM"/>
    <property type="resolution" value="3.10 A"/>
    <property type="chains" value="LC=2-362"/>
</dbReference>
<dbReference type="PDB" id="8BJQ">
    <property type="method" value="EM"/>
    <property type="resolution" value="3.80 A"/>
    <property type="chains" value="LC=2-362"/>
</dbReference>
<dbReference type="PDB" id="8BN3">
    <property type="method" value="EM"/>
    <property type="resolution" value="2.40 A"/>
    <property type="chains" value="L4=2-362"/>
</dbReference>
<dbReference type="PDB" id="8BQD">
    <property type="method" value="EM"/>
    <property type="resolution" value="3.90 A"/>
    <property type="chains" value="BE=2-362"/>
</dbReference>
<dbReference type="PDB" id="8BQX">
    <property type="method" value="EM"/>
    <property type="resolution" value="3.80 A"/>
    <property type="chains" value="BE=2-362"/>
</dbReference>
<dbReference type="PDB" id="8CCS">
    <property type="method" value="EM"/>
    <property type="resolution" value="1.97 A"/>
    <property type="chains" value="GG=1-362"/>
</dbReference>
<dbReference type="PDB" id="8CDL">
    <property type="method" value="EM"/>
    <property type="resolution" value="2.72 A"/>
    <property type="chains" value="GG=1-362"/>
</dbReference>
<dbReference type="PDB" id="8CDR">
    <property type="method" value="EM"/>
    <property type="resolution" value="2.04 A"/>
    <property type="chains" value="GG=1-362"/>
</dbReference>
<dbReference type="PDB" id="8CEH">
    <property type="method" value="EM"/>
    <property type="resolution" value="2.05 A"/>
    <property type="chains" value="GG=1-362"/>
</dbReference>
<dbReference type="PDB" id="8CF5">
    <property type="method" value="EM"/>
    <property type="resolution" value="2.71 A"/>
    <property type="chains" value="GG=1-362"/>
</dbReference>
<dbReference type="PDB" id="8CG8">
    <property type="method" value="EM"/>
    <property type="resolution" value="2.57 A"/>
    <property type="chains" value="GG=1-362"/>
</dbReference>
<dbReference type="PDB" id="8CGN">
    <property type="method" value="EM"/>
    <property type="resolution" value="2.28 A"/>
    <property type="chains" value="GG=1-362"/>
</dbReference>
<dbReference type="PDB" id="8CIV">
    <property type="method" value="EM"/>
    <property type="resolution" value="2.47 A"/>
    <property type="chains" value="GG=1-362"/>
</dbReference>
<dbReference type="PDB" id="8CKU">
    <property type="method" value="EM"/>
    <property type="resolution" value="3.11 A"/>
    <property type="chains" value="GG=1-362"/>
</dbReference>
<dbReference type="PDB" id="8CMJ">
    <property type="method" value="EM"/>
    <property type="resolution" value="3.79 A"/>
    <property type="chains" value="GG=1-362"/>
</dbReference>
<dbReference type="PDB" id="8E5T">
    <property type="method" value="EM"/>
    <property type="resolution" value="4.00 A"/>
    <property type="chains" value="C=1-362"/>
</dbReference>
<dbReference type="PDB" id="8HFR">
    <property type="method" value="EM"/>
    <property type="resolution" value="2.64 A"/>
    <property type="chains" value="DO=1-362"/>
</dbReference>
<dbReference type="PDB" id="8K2D">
    <property type="method" value="EM"/>
    <property type="resolution" value="3.20 A"/>
    <property type="chains" value="LC=1-362"/>
</dbReference>
<dbReference type="PDB" id="8K82">
    <property type="method" value="EM"/>
    <property type="resolution" value="3.00 A"/>
    <property type="chains" value="LC=1-362"/>
</dbReference>
<dbReference type="PDB" id="8P4V">
    <property type="method" value="X-ray"/>
    <property type="resolution" value="3.16 A"/>
    <property type="chains" value="CF/l=1-362"/>
</dbReference>
<dbReference type="PDB" id="8P8M">
    <property type="method" value="EM"/>
    <property type="resolution" value="2.66 A"/>
    <property type="chains" value="LH=1-362"/>
</dbReference>
<dbReference type="PDB" id="8P8N">
    <property type="method" value="EM"/>
    <property type="resolution" value="2.15 A"/>
    <property type="chains" value="LH=1-362"/>
</dbReference>
<dbReference type="PDB" id="8P8U">
    <property type="method" value="EM"/>
    <property type="resolution" value="2.23 A"/>
    <property type="chains" value="LH=1-362"/>
</dbReference>
<dbReference type="PDB" id="8P9A">
    <property type="method" value="X-ray"/>
    <property type="resolution" value="2.90 A"/>
    <property type="chains" value="CF/l=1-362"/>
</dbReference>
<dbReference type="PDB" id="8PFR">
    <property type="method" value="EM"/>
    <property type="resolution" value="2.15 A"/>
    <property type="chains" value="LH=1-362"/>
</dbReference>
<dbReference type="PDB" id="8T2X">
    <property type="method" value="EM"/>
    <property type="resolution" value="2.46 A"/>
    <property type="chains" value="AC=1-362"/>
</dbReference>
<dbReference type="PDB" id="8T2Y">
    <property type="method" value="EM"/>
    <property type="resolution" value="2.20 A"/>
    <property type="chains" value="AC=1-362"/>
</dbReference>
<dbReference type="PDB" id="8T2Z">
    <property type="method" value="EM"/>
    <property type="resolution" value="2.40 A"/>
    <property type="chains" value="AC=1-362"/>
</dbReference>
<dbReference type="PDB" id="8T30">
    <property type="method" value="EM"/>
    <property type="resolution" value="2.88 A"/>
    <property type="chains" value="AC=1-362"/>
</dbReference>
<dbReference type="PDB" id="8T3A">
    <property type="method" value="EM"/>
    <property type="resolution" value="2.86 A"/>
    <property type="chains" value="AC=1-362"/>
</dbReference>
<dbReference type="PDB" id="8T3B">
    <property type="method" value="EM"/>
    <property type="resolution" value="3.08 A"/>
    <property type="chains" value="AC=1-362"/>
</dbReference>
<dbReference type="PDB" id="8T3C">
    <property type="method" value="EM"/>
    <property type="resolution" value="3.86 A"/>
    <property type="chains" value="AC=1-362"/>
</dbReference>
<dbReference type="PDB" id="8T3D">
    <property type="method" value="EM"/>
    <property type="resolution" value="2.95 A"/>
    <property type="chains" value="AC=1-362"/>
</dbReference>
<dbReference type="PDB" id="8T3E">
    <property type="method" value="EM"/>
    <property type="resolution" value="3.04 A"/>
    <property type="chains" value="AC=1-362"/>
</dbReference>
<dbReference type="PDB" id="8T3F">
    <property type="method" value="EM"/>
    <property type="resolution" value="3.09 A"/>
    <property type="chains" value="AC=1-362"/>
</dbReference>
<dbReference type="PDB" id="8UT0">
    <property type="method" value="EM"/>
    <property type="resolution" value="3.22 A"/>
    <property type="chains" value="LF=2-362"/>
</dbReference>
<dbReference type="PDB" id="8UTI">
    <property type="method" value="EM"/>
    <property type="resolution" value="3.13 A"/>
    <property type="chains" value="LF=2-362"/>
</dbReference>
<dbReference type="PDB" id="8V83">
    <property type="method" value="EM"/>
    <property type="resolution" value="2.53 A"/>
    <property type="chains" value="C=1-362"/>
</dbReference>
<dbReference type="PDB" id="8V84">
    <property type="method" value="EM"/>
    <property type="resolution" value="2.70 A"/>
    <property type="chains" value="C=1-362"/>
</dbReference>
<dbReference type="PDB" id="8V87">
    <property type="method" value="EM"/>
    <property type="resolution" value="2.66 A"/>
    <property type="chains" value="C=1-362"/>
</dbReference>
<dbReference type="PDB" id="8XU8">
    <property type="method" value="EM"/>
    <property type="resolution" value="3.40 A"/>
    <property type="chains" value="F=2-362"/>
</dbReference>
<dbReference type="PDB" id="8Y0U">
    <property type="method" value="EM"/>
    <property type="resolution" value="3.59 A"/>
    <property type="chains" value="LC=1-362"/>
</dbReference>
<dbReference type="PDB" id="8YLD">
    <property type="method" value="EM"/>
    <property type="resolution" value="3.90 A"/>
    <property type="chains" value="F=2-362"/>
</dbReference>
<dbReference type="PDB" id="8YLR">
    <property type="method" value="EM"/>
    <property type="resolution" value="3.90 A"/>
    <property type="chains" value="F=2-362"/>
</dbReference>
<dbReference type="PDB" id="8Z70">
    <property type="method" value="EM"/>
    <property type="resolution" value="3.20 A"/>
    <property type="chains" value="F=2-362"/>
</dbReference>
<dbReference type="PDB" id="8Z71">
    <property type="method" value="EM"/>
    <property type="resolution" value="3.60 A"/>
    <property type="chains" value="F=2-362"/>
</dbReference>
<dbReference type="PDB" id="9F9S">
    <property type="method" value="EM"/>
    <property type="resolution" value="2.90 A"/>
    <property type="chains" value="Ly/My=1-362"/>
</dbReference>
<dbReference type="PDBsum" id="3J6X"/>
<dbReference type="PDBsum" id="3J6Y"/>
<dbReference type="PDBsum" id="3J77"/>
<dbReference type="PDBsum" id="3J78"/>
<dbReference type="PDBsum" id="3JCT"/>
<dbReference type="PDBsum" id="4U3M"/>
<dbReference type="PDBsum" id="4U3N"/>
<dbReference type="PDBsum" id="4U3U"/>
<dbReference type="PDBsum" id="4U4N"/>
<dbReference type="PDBsum" id="4U4O"/>
<dbReference type="PDBsum" id="4U4Q"/>
<dbReference type="PDBsum" id="4U4R"/>
<dbReference type="PDBsum" id="4U4U"/>
<dbReference type="PDBsum" id="4U4Y"/>
<dbReference type="PDBsum" id="4U4Z"/>
<dbReference type="PDBsum" id="4U50"/>
<dbReference type="PDBsum" id="4U51"/>
<dbReference type="PDBsum" id="4U52"/>
<dbReference type="PDBsum" id="4U53"/>
<dbReference type="PDBsum" id="4U55"/>
<dbReference type="PDBsum" id="4U56"/>
<dbReference type="PDBsum" id="4U6F"/>
<dbReference type="PDBsum" id="4V5Z"/>
<dbReference type="PDBsum" id="4V6I"/>
<dbReference type="PDBsum" id="4V7F"/>
<dbReference type="PDBsum" id="4V7R"/>
<dbReference type="PDBsum" id="4V88"/>
<dbReference type="PDBsum" id="4V8T"/>
<dbReference type="PDBsum" id="4V8Y"/>
<dbReference type="PDBsum" id="4V8Z"/>
<dbReference type="PDBsum" id="4V91"/>
<dbReference type="PDBsum" id="5APN"/>
<dbReference type="PDBsum" id="5APO"/>
<dbReference type="PDBsum" id="5DAT"/>
<dbReference type="PDBsum" id="5DC3"/>
<dbReference type="PDBsum" id="5DGE"/>
<dbReference type="PDBsum" id="5DGF"/>
<dbReference type="PDBsum" id="5DGV"/>
<dbReference type="PDBsum" id="5FCI"/>
<dbReference type="PDBsum" id="5FCJ"/>
<dbReference type="PDBsum" id="5GAK"/>
<dbReference type="PDBsum" id="5H4P"/>
<dbReference type="PDBsum" id="5I4L"/>
<dbReference type="PDBsum" id="5JCS"/>
<dbReference type="PDBsum" id="5JUO"/>
<dbReference type="PDBsum" id="5JUP"/>
<dbReference type="PDBsum" id="5JUS"/>
<dbReference type="PDBsum" id="5JUT"/>
<dbReference type="PDBsum" id="5JUU"/>
<dbReference type="PDBsum" id="5LYB"/>
<dbReference type="PDBsum" id="5M1J"/>
<dbReference type="PDBsum" id="5MC6"/>
<dbReference type="PDBsum" id="5MEI"/>
<dbReference type="PDBsum" id="5NDG"/>
<dbReference type="PDBsum" id="5NDV"/>
<dbReference type="PDBsum" id="5NDW"/>
<dbReference type="PDBsum" id="5OBM"/>
<dbReference type="PDBsum" id="5ON6"/>
<dbReference type="PDBsum" id="5T62"/>
<dbReference type="PDBsum" id="5T6R"/>
<dbReference type="PDBsum" id="5TBW"/>
<dbReference type="PDBsum" id="5TGA"/>
<dbReference type="PDBsum" id="5TGM"/>
<dbReference type="PDBsum" id="5Z3G"/>
<dbReference type="PDBsum" id="6C0F"/>
<dbReference type="PDBsum" id="6CB1"/>
<dbReference type="PDBsum" id="6ELZ"/>
<dbReference type="PDBsum" id="6EM1"/>
<dbReference type="PDBsum" id="6EM3"/>
<dbReference type="PDBsum" id="6EM4"/>
<dbReference type="PDBsum" id="6EM5"/>
<dbReference type="PDBsum" id="6FT6"/>
<dbReference type="PDBsum" id="6GQ1"/>
<dbReference type="PDBsum" id="6GQB"/>
<dbReference type="PDBsum" id="6GQV"/>
<dbReference type="PDBsum" id="6HD7"/>
<dbReference type="PDBsum" id="6HHQ"/>
<dbReference type="PDBsum" id="6I7O"/>
<dbReference type="PDBsum" id="6M62"/>
<dbReference type="PDBsum" id="6N8J"/>
<dbReference type="PDBsum" id="6N8K"/>
<dbReference type="PDBsum" id="6N8L"/>
<dbReference type="PDBsum" id="6N8M"/>
<dbReference type="PDBsum" id="6N8N"/>
<dbReference type="PDBsum" id="6N8O"/>
<dbReference type="PDBsum" id="6OIG"/>
<dbReference type="PDBsum" id="6Q8Y"/>
<dbReference type="PDBsum" id="6QIK"/>
<dbReference type="PDBsum" id="6QT0"/>
<dbReference type="PDBsum" id="6QTZ"/>
<dbReference type="PDBsum" id="6R84"/>
<dbReference type="PDBsum" id="6R86"/>
<dbReference type="PDBsum" id="6R87"/>
<dbReference type="PDBsum" id="6RI5"/>
<dbReference type="PDBsum" id="6RZZ"/>
<dbReference type="PDBsum" id="6S05"/>
<dbReference type="PDBsum" id="6S47"/>
<dbReference type="PDBsum" id="6SNT"/>
<dbReference type="PDBsum" id="6SV4"/>
<dbReference type="PDBsum" id="6T4Q"/>
<dbReference type="PDBsum" id="6T7I"/>
<dbReference type="PDBsum" id="6T7T"/>
<dbReference type="PDBsum" id="6T83"/>
<dbReference type="PDBsum" id="6TB3"/>
<dbReference type="PDBsum" id="6TNU"/>
<dbReference type="PDBsum" id="6WOO"/>
<dbReference type="PDBsum" id="6YLG"/>
<dbReference type="PDBsum" id="6YLH"/>
<dbReference type="PDBsum" id="6YLX"/>
<dbReference type="PDBsum" id="6YLY"/>
<dbReference type="PDBsum" id="6Z6J"/>
<dbReference type="PDBsum" id="6Z6K"/>
<dbReference type="PDBsum" id="7AZY"/>
<dbReference type="PDBsum" id="7B7D"/>
<dbReference type="PDBsum" id="7BT6"/>
<dbReference type="PDBsum" id="7BTB"/>
<dbReference type="PDBsum" id="7MPI"/>
<dbReference type="PDBsum" id="7MPJ"/>
<dbReference type="PDBsum" id="7N8B"/>
<dbReference type="PDBsum" id="7NAC"/>
<dbReference type="PDBsum" id="7NRC"/>
<dbReference type="PDBsum" id="7NRD"/>
<dbReference type="PDBsum" id="7OF1"/>
<dbReference type="PDBsum" id="7OH3"/>
<dbReference type="PDBsum" id="7OHP"/>
<dbReference type="PDBsum" id="7OHQ"/>
<dbReference type="PDBsum" id="7OHR"/>
<dbReference type="PDBsum" id="7OHS"/>
<dbReference type="PDBsum" id="7OHT"/>
<dbReference type="PDBsum" id="7OHU"/>
<dbReference type="PDBsum" id="7OHV"/>
<dbReference type="PDBsum" id="7OHW"/>
<dbReference type="PDBsum" id="7OHX"/>
<dbReference type="PDBsum" id="7OHY"/>
<dbReference type="PDBsum" id="7R7A"/>
<dbReference type="PDBsum" id="7U0H"/>
<dbReference type="PDBsum" id="7UG6"/>
<dbReference type="PDBsum" id="7UOO"/>
<dbReference type="PDBsum" id="7UQB"/>
<dbReference type="PDBsum" id="7UQZ"/>
<dbReference type="PDBsum" id="7V08"/>
<dbReference type="PDBsum" id="7Z34"/>
<dbReference type="PDBsum" id="7ZPQ"/>
<dbReference type="PDBsum" id="7ZRS"/>
<dbReference type="PDBsum" id="7ZS5"/>
<dbReference type="PDBsum" id="7ZUW"/>
<dbReference type="PDBsum" id="7ZUX"/>
<dbReference type="PDBsum" id="7ZW0"/>
<dbReference type="PDBsum" id="8AAF"/>
<dbReference type="PDBsum" id="8AGT"/>
<dbReference type="PDBsum" id="8AGU"/>
<dbReference type="PDBsum" id="8AGV"/>
<dbReference type="PDBsum" id="8AGW"/>
<dbReference type="PDBsum" id="8AGX"/>
<dbReference type="PDBsum" id="8AGZ"/>
<dbReference type="PDBsum" id="8BIP"/>
<dbReference type="PDBsum" id="8BJQ"/>
<dbReference type="PDBsum" id="8BN3"/>
<dbReference type="PDBsum" id="8BQD"/>
<dbReference type="PDBsum" id="8BQX"/>
<dbReference type="PDBsum" id="8CCS"/>
<dbReference type="PDBsum" id="8CDL"/>
<dbReference type="PDBsum" id="8CDR"/>
<dbReference type="PDBsum" id="8CEH"/>
<dbReference type="PDBsum" id="8CF5"/>
<dbReference type="PDBsum" id="8CG8"/>
<dbReference type="PDBsum" id="8CGN"/>
<dbReference type="PDBsum" id="8CIV"/>
<dbReference type="PDBsum" id="8CKU"/>
<dbReference type="PDBsum" id="8CMJ"/>
<dbReference type="PDBsum" id="8E5T"/>
<dbReference type="PDBsum" id="8HFR"/>
<dbReference type="PDBsum" id="8K2D"/>
<dbReference type="PDBsum" id="8K82"/>
<dbReference type="PDBsum" id="8P4V"/>
<dbReference type="PDBsum" id="8P8M"/>
<dbReference type="PDBsum" id="8P8N"/>
<dbReference type="PDBsum" id="8P8U"/>
<dbReference type="PDBsum" id="8P9A"/>
<dbReference type="PDBsum" id="8PFR"/>
<dbReference type="PDBsum" id="8T2X"/>
<dbReference type="PDBsum" id="8T2Y"/>
<dbReference type="PDBsum" id="8T2Z"/>
<dbReference type="PDBsum" id="8T30"/>
<dbReference type="PDBsum" id="8T3A"/>
<dbReference type="PDBsum" id="8T3B"/>
<dbReference type="PDBsum" id="8T3C"/>
<dbReference type="PDBsum" id="8T3D"/>
<dbReference type="PDBsum" id="8T3E"/>
<dbReference type="PDBsum" id="8T3F"/>
<dbReference type="PDBsum" id="8UT0"/>
<dbReference type="PDBsum" id="8UTI"/>
<dbReference type="PDBsum" id="8V83"/>
<dbReference type="PDBsum" id="8V84"/>
<dbReference type="PDBsum" id="8V87"/>
<dbReference type="PDBsum" id="8XU8"/>
<dbReference type="PDBsum" id="8Y0U"/>
<dbReference type="PDBsum" id="8YLD"/>
<dbReference type="PDBsum" id="8YLR"/>
<dbReference type="PDBsum" id="8Z70"/>
<dbReference type="PDBsum" id="8Z71"/>
<dbReference type="PDBsum" id="9F9S"/>
<dbReference type="EMDB" id="EMD-0047"/>
<dbReference type="EMDB" id="EMD-0048"/>
<dbReference type="EMDB" id="EMD-0049"/>
<dbReference type="EMDB" id="EMD-0202"/>
<dbReference type="EMDB" id="EMD-0369"/>
<dbReference type="EMDB" id="EMD-0370"/>
<dbReference type="EMDB" id="EMD-0371"/>
<dbReference type="EMDB" id="EMD-0372"/>
<dbReference type="EMDB" id="EMD-0373"/>
<dbReference type="EMDB" id="EMD-0374"/>
<dbReference type="EMDB" id="EMD-10068"/>
<dbReference type="EMDB" id="EMD-10071"/>
<dbReference type="EMDB" id="EMD-10098"/>
<dbReference type="EMDB" id="EMD-10262"/>
<dbReference type="EMDB" id="EMD-10315"/>
<dbReference type="EMDB" id="EMD-10377"/>
<dbReference type="EMDB" id="EMD-10396"/>
<dbReference type="EMDB" id="EMD-10397"/>
<dbReference type="EMDB" id="EMD-10398"/>
<dbReference type="EMDB" id="EMD-10431"/>
<dbReference type="EMDB" id="EMD-10537"/>
<dbReference type="EMDB" id="EMD-10838"/>
<dbReference type="EMDB" id="EMD-10839"/>
<dbReference type="EMDB" id="EMD-10841"/>
<dbReference type="EMDB" id="EMD-10842"/>
<dbReference type="EMDB" id="EMD-11096"/>
<dbReference type="EMDB" id="EMD-11097"/>
<dbReference type="EMDB" id="EMD-11951"/>
<dbReference type="EMDB" id="EMD-12081"/>
<dbReference type="EMDB" id="EMD-12534"/>
<dbReference type="EMDB" id="EMD-12535"/>
<dbReference type="EMDB" id="EMD-12866"/>
<dbReference type="EMDB" id="EMD-12892"/>
<dbReference type="EMDB" id="EMD-12904"/>
<dbReference type="EMDB" id="EMD-12905"/>
<dbReference type="EMDB" id="EMD-12906"/>
<dbReference type="EMDB" id="EMD-12907"/>
<dbReference type="EMDB" id="EMD-12908"/>
<dbReference type="EMDB" id="EMD-12909"/>
<dbReference type="EMDB" id="EMD-12910"/>
<dbReference type="EMDB" id="EMD-12911"/>
<dbReference type="EMDB" id="EMD-12912"/>
<dbReference type="EMDB" id="EMD-12913"/>
<dbReference type="EMDB" id="EMD-14471"/>
<dbReference type="EMDB" id="EMD-14926"/>
<dbReference type="EMDB" id="EMD-14979"/>
<dbReference type="EMDB" id="EMD-14990"/>
<dbReference type="EMDB" id="EMD-15296"/>
<dbReference type="EMDB" id="EMD-15423"/>
<dbReference type="EMDB" id="EMD-15425"/>
<dbReference type="EMDB" id="EMD-15426"/>
<dbReference type="EMDB" id="EMD-15427"/>
<dbReference type="EMDB" id="EMD-15428"/>
<dbReference type="EMDB" id="EMD-16086"/>
<dbReference type="EMDB" id="EMD-16090"/>
<dbReference type="EMDB" id="EMD-16191"/>
<dbReference type="EMDB" id="EMD-16563"/>
<dbReference type="EMDB" id="EMD-16591"/>
<dbReference type="EMDB" id="EMD-16594"/>
<dbReference type="EMDB" id="EMD-16609"/>
<dbReference type="EMDB" id="EMD-16616"/>
<dbReference type="EMDB" id="EMD-16634"/>
<dbReference type="EMDB" id="EMD-16648"/>
<dbReference type="EMDB" id="EMD-16684"/>
<dbReference type="EMDB" id="EMD-16702"/>
<dbReference type="EMDB" id="EMD-16729"/>
<dbReference type="EMDB" id="EMD-17549"/>
<dbReference type="EMDB" id="EMD-17550"/>
<dbReference type="EMDB" id="EMD-17552"/>
<dbReference type="EMDB" id="EMD-17653"/>
<dbReference type="EMDB" id="EMD-20077"/>
<dbReference type="EMDB" id="EMD-21859"/>
<dbReference type="EMDB" id="EMD-23934"/>
<dbReference type="EMDB" id="EMD-23935"/>
<dbReference type="EMDB" id="EMD-24235"/>
<dbReference type="EMDB" id="EMD-24269"/>
<dbReference type="EMDB" id="EMD-24296"/>
<dbReference type="EMDB" id="EMD-26259"/>
<dbReference type="EMDB" id="EMD-26485"/>
<dbReference type="EMDB" id="EMD-26651"/>
<dbReference type="EMDB" id="EMD-26686"/>
<dbReference type="EMDB" id="EMD-26703"/>
<dbReference type="EMDB" id="EMD-26941"/>
<dbReference type="EMDB" id="EMD-27919"/>
<dbReference type="EMDB" id="EMD-30108"/>
<dbReference type="EMDB" id="EMD-30170"/>
<dbReference type="EMDB" id="EMD-30174"/>
<dbReference type="EMDB" id="EMD-3461"/>
<dbReference type="EMDB" id="EMD-34725"/>
<dbReference type="EMDB" id="EMD-36839"/>
<dbReference type="EMDB" id="EMD-36945"/>
<dbReference type="EMDB" id="EMD-38660"/>
<dbReference type="EMDB" id="EMD-4140"/>
<dbReference type="EMDB" id="EMD-42525"/>
<dbReference type="EMDB" id="EMD-42540"/>
<dbReference type="EMDB" id="EMD-43017"/>
<dbReference type="EMDB" id="EMD-4302"/>
<dbReference type="EMDB" id="EMD-43021"/>
<dbReference type="EMDB" id="EMD-43027"/>
<dbReference type="EMDB" id="EMD-4427"/>
<dbReference type="EMDB" id="EMD-4474"/>
<dbReference type="EMDB" id="EMD-4560"/>
<dbReference type="EMDB" id="EMD-4630"/>
<dbReference type="EMDB" id="EMD-4636"/>
<dbReference type="EMDB" id="EMD-4751"/>
<dbReference type="EMDB" id="EMD-4752"/>
<dbReference type="EMDB" id="EMD-4753"/>
<dbReference type="EMDB" id="EMD-4884"/>
<dbReference type="EMDB" id="EMD-50259"/>
<dbReference type="EMDB" id="EMD-6878"/>
<dbReference type="EMDB" id="EMD-7324"/>
<dbReference type="EMDB" id="EMD-8362"/>
<dbReference type="EMDB" id="EMD-8368"/>
<dbReference type="SMR" id="P10664"/>
<dbReference type="BioGRID" id="32733">
    <property type="interactions" value="404"/>
</dbReference>
<dbReference type="ComplexPortal" id="CPX-1601">
    <property type="entry name" value="60S cytosolic large ribosomal subunit"/>
</dbReference>
<dbReference type="DIP" id="DIP-8314N"/>
<dbReference type="FunCoup" id="P10664">
    <property type="interactions" value="1704"/>
</dbReference>
<dbReference type="IntAct" id="P10664">
    <property type="interactions" value="309"/>
</dbReference>
<dbReference type="MINT" id="P10664"/>
<dbReference type="STRING" id="4932.YBR031W"/>
<dbReference type="CarbonylDB" id="P10664"/>
<dbReference type="iPTMnet" id="P10664"/>
<dbReference type="PaxDb" id="4932-YBR031W"/>
<dbReference type="PeptideAtlas" id="P10664"/>
<dbReference type="TopDownProteomics" id="P10664"/>
<dbReference type="EnsemblFungi" id="YBR031W_mRNA">
    <property type="protein sequence ID" value="YBR031W"/>
    <property type="gene ID" value="YBR031W"/>
</dbReference>
<dbReference type="GeneID" id="852319"/>
<dbReference type="KEGG" id="sce:YBR031W"/>
<dbReference type="AGR" id="SGD:S000000235"/>
<dbReference type="SGD" id="S000000235">
    <property type="gene designation" value="RPL4A"/>
</dbReference>
<dbReference type="VEuPathDB" id="FungiDB:YBR031W"/>
<dbReference type="eggNOG" id="KOG1475">
    <property type="taxonomic scope" value="Eukaryota"/>
</dbReference>
<dbReference type="GeneTree" id="ENSGT00390000018145"/>
<dbReference type="HOGENOM" id="CLU_026535_4_0_1"/>
<dbReference type="InParanoid" id="P10664"/>
<dbReference type="OMA" id="ALYGTWR"/>
<dbReference type="OrthoDB" id="10259785at2759"/>
<dbReference type="BioCyc" id="YEAST:G3O-29009-MONOMER"/>
<dbReference type="Reactome" id="R-SCE-156827">
    <property type="pathway name" value="L13a-mediated translational silencing of Ceruloplasmin expression"/>
</dbReference>
<dbReference type="Reactome" id="R-SCE-1799339">
    <property type="pathway name" value="SRP-dependent cotranslational protein targeting to membrane"/>
</dbReference>
<dbReference type="Reactome" id="R-SCE-72689">
    <property type="pathway name" value="Formation of a pool of free 40S subunits"/>
</dbReference>
<dbReference type="Reactome" id="R-SCE-72706">
    <property type="pathway name" value="GTP hydrolysis and joining of the 60S ribosomal subunit"/>
</dbReference>
<dbReference type="Reactome" id="R-SCE-975956">
    <property type="pathway name" value="Nonsense Mediated Decay (NMD) independent of the Exon Junction Complex (EJC)"/>
</dbReference>
<dbReference type="Reactome" id="R-SCE-975957">
    <property type="pathway name" value="Nonsense Mediated Decay (NMD) enhanced by the Exon Junction Complex (EJC)"/>
</dbReference>
<dbReference type="PRO" id="PR:P10664"/>
<dbReference type="Proteomes" id="UP000002311">
    <property type="component" value="Chromosome II"/>
</dbReference>
<dbReference type="RNAct" id="P10664">
    <property type="molecule type" value="protein"/>
</dbReference>
<dbReference type="GO" id="GO:0005829">
    <property type="term" value="C:cytosol"/>
    <property type="evidence" value="ECO:0000304"/>
    <property type="project" value="Reactome"/>
</dbReference>
<dbReference type="GO" id="GO:0022625">
    <property type="term" value="C:cytosolic large ribosomal subunit"/>
    <property type="evidence" value="ECO:0000314"/>
    <property type="project" value="SGD"/>
</dbReference>
<dbReference type="GO" id="GO:0005634">
    <property type="term" value="C:nucleus"/>
    <property type="evidence" value="ECO:0007669"/>
    <property type="project" value="UniProtKB-SubCell"/>
</dbReference>
<dbReference type="GO" id="GO:0003723">
    <property type="term" value="F:RNA binding"/>
    <property type="evidence" value="ECO:0000318"/>
    <property type="project" value="GO_Central"/>
</dbReference>
<dbReference type="GO" id="GO:0003735">
    <property type="term" value="F:structural constituent of ribosome"/>
    <property type="evidence" value="ECO:0000318"/>
    <property type="project" value="GO_Central"/>
</dbReference>
<dbReference type="GO" id="GO:0002181">
    <property type="term" value="P:cytoplasmic translation"/>
    <property type="evidence" value="ECO:0000305"/>
    <property type="project" value="SGD"/>
</dbReference>
<dbReference type="FunFam" id="3.40.1370.10:FF:000002">
    <property type="entry name" value="60S ribosomal protein L4"/>
    <property type="match status" value="1"/>
</dbReference>
<dbReference type="Gene3D" id="3.40.1370.10">
    <property type="match status" value="1"/>
</dbReference>
<dbReference type="InterPro" id="IPR025755">
    <property type="entry name" value="Ribos_uL4_C_dom"/>
</dbReference>
<dbReference type="InterPro" id="IPR002136">
    <property type="entry name" value="Ribosomal_uL4"/>
</dbReference>
<dbReference type="InterPro" id="IPR023574">
    <property type="entry name" value="Ribosomal_uL4_dom_sf"/>
</dbReference>
<dbReference type="InterPro" id="IPR013000">
    <property type="entry name" value="Ribosomal_uL4_euk/arc_CS"/>
</dbReference>
<dbReference type="InterPro" id="IPR045240">
    <property type="entry name" value="Ribosomal_uL4_euk/arch"/>
</dbReference>
<dbReference type="PANTHER" id="PTHR19431">
    <property type="entry name" value="60S RIBOSOMAL PROTEIN L4"/>
    <property type="match status" value="1"/>
</dbReference>
<dbReference type="Pfam" id="PF14374">
    <property type="entry name" value="Ribos_L4_asso_C"/>
    <property type="match status" value="1"/>
</dbReference>
<dbReference type="Pfam" id="PF00573">
    <property type="entry name" value="Ribosomal_L4"/>
    <property type="match status" value="1"/>
</dbReference>
<dbReference type="SUPFAM" id="SSF52166">
    <property type="entry name" value="Ribosomal protein L4"/>
    <property type="match status" value="1"/>
</dbReference>
<dbReference type="PROSITE" id="PS00939">
    <property type="entry name" value="RIBOSOMAL_L1E"/>
    <property type="match status" value="1"/>
</dbReference>
<keyword id="KW-0002">3D-structure</keyword>
<keyword id="KW-0007">Acetylation</keyword>
<keyword id="KW-0963">Cytoplasm</keyword>
<keyword id="KW-0903">Direct protein sequencing</keyword>
<keyword id="KW-0488">Methylation</keyword>
<keyword id="KW-0539">Nucleus</keyword>
<keyword id="KW-1185">Reference proteome</keyword>
<keyword id="KW-0687">Ribonucleoprotein</keyword>
<keyword id="KW-0689">Ribosomal protein</keyword>
<keyword id="KW-0694">RNA-binding</keyword>
<comment type="function">
    <text evidence="3 10">Component of the ribosome, a large ribonucleoprotein complex responsible for the synthesis of proteins in the cell. The small ribosomal subunit (SSU) binds messenger RNAs (mRNAs) and translates the encoded message by selecting cognate aminoacyl-transfer RNA (tRNA) molecules. The large subunit (LSU) contains the ribosomal catalytic site termed the peptidyl transferase center (PTC), which catalyzes the formation of peptide bonds, thereby polymerizing the amino acids delivered by tRNAs into a polypeptide chain. The nascent polypeptides leave the ribosome through a tunnel in the LSU and interact with protein factors that function in enzymatic processing, targeting, and the membrane insertion of nascent chains at the exit of the ribosomal tunnel (PubMed:22096102). uL4 participates in the regulation of the accumulation of its own mRNA (PubMed:2065661).</text>
</comment>
<comment type="subunit">
    <text evidence="4 5 11">Component of the large ribosomal subunit (LSU). Mature yeast ribosomes consist of a small (40S) and a large (60S) subunit. The 40S small subunit contains 1 molecule of ribosomal RNA (18S rRNA) and 33 different proteins (encoded by 57 genes). The large 60S subunit contains 3 rRNA molecules (25S, 5.8S and 5S rRNA) and 46 different proteins (encoded by 81 genes). uL4 is associated with the polypeptide exit tunnel (PubMed:22096102, PubMed:9559554). uL4 interacts with its chaperone ACL4 and the nuclear import receptor KAP104 (PubMed:25936803).</text>
</comment>
<comment type="subcellular location">
    <subcellularLocation>
        <location evidence="1 4 5">Cytoplasm</location>
    </subcellularLocation>
    <subcellularLocation>
        <location evidence="5">Nucleus</location>
    </subcellularLocation>
</comment>
<comment type="domain">
    <text evidence="5">The eukaryote-specific C-terminal extension harbors a nuclear import signal and delivers the ACL4-uL4/RPL4 complex to the pre-ribosome, triggering uL4 release from ACL4 and incorporation into the 60S ribosomal subunit.</text>
</comment>
<comment type="PTM">
    <text evidence="2">N-terminally acetylated by acetyltransferase NatA.</text>
</comment>
<comment type="miscellaneous">
    <text evidence="9">There are 2 genes for uL4 in yeast.</text>
</comment>
<comment type="similarity">
    <text evidence="9">Belongs to the universal ribosomal protein uL4 family.</text>
</comment>